<sequence>MTVKEYAGELGISKRLLTDIKFGGGDLQINGEHVTVKYVLKEGDLLIVKFPEEQVSETLLAEPVPLDILYEDEHVLVINKQPYVSSIPSREHPSGSIANGIIDHYQTTGVRATVHLVTRLDRDTSGIMLVAKHRFAHSILSSAQKNGLVKRRYAAVVHGRMAQMEGTVDAPIGRHPDSIIERTVTPDGQKAVTHFYVTCANDDMTSVALQLETGRTHQIRVHMSYLGHPLCGDTLYGGTRQEIGRQALHSEHLSFIHPLTQENMRFHAPLPQDMSKLIKGENH</sequence>
<reference key="1">
    <citation type="journal article" date="1997" name="Nature">
        <title>The complete genome sequence of the Gram-positive bacterium Bacillus subtilis.</title>
        <authorList>
            <person name="Kunst F."/>
            <person name="Ogasawara N."/>
            <person name="Moszer I."/>
            <person name="Albertini A.M."/>
            <person name="Alloni G."/>
            <person name="Azevedo V."/>
            <person name="Bertero M.G."/>
            <person name="Bessieres P."/>
            <person name="Bolotin A."/>
            <person name="Borchert S."/>
            <person name="Borriss R."/>
            <person name="Boursier L."/>
            <person name="Brans A."/>
            <person name="Braun M."/>
            <person name="Brignell S.C."/>
            <person name="Bron S."/>
            <person name="Brouillet S."/>
            <person name="Bruschi C.V."/>
            <person name="Caldwell B."/>
            <person name="Capuano V."/>
            <person name="Carter N.M."/>
            <person name="Choi S.-K."/>
            <person name="Codani J.-J."/>
            <person name="Connerton I.F."/>
            <person name="Cummings N.J."/>
            <person name="Daniel R.A."/>
            <person name="Denizot F."/>
            <person name="Devine K.M."/>
            <person name="Duesterhoeft A."/>
            <person name="Ehrlich S.D."/>
            <person name="Emmerson P.T."/>
            <person name="Entian K.-D."/>
            <person name="Errington J."/>
            <person name="Fabret C."/>
            <person name="Ferrari E."/>
            <person name="Foulger D."/>
            <person name="Fritz C."/>
            <person name="Fujita M."/>
            <person name="Fujita Y."/>
            <person name="Fuma S."/>
            <person name="Galizzi A."/>
            <person name="Galleron N."/>
            <person name="Ghim S.-Y."/>
            <person name="Glaser P."/>
            <person name="Goffeau A."/>
            <person name="Golightly E.J."/>
            <person name="Grandi G."/>
            <person name="Guiseppi G."/>
            <person name="Guy B.J."/>
            <person name="Haga K."/>
            <person name="Haiech J."/>
            <person name="Harwood C.R."/>
            <person name="Henaut A."/>
            <person name="Hilbert H."/>
            <person name="Holsappel S."/>
            <person name="Hosono S."/>
            <person name="Hullo M.-F."/>
            <person name="Itaya M."/>
            <person name="Jones L.-M."/>
            <person name="Joris B."/>
            <person name="Karamata D."/>
            <person name="Kasahara Y."/>
            <person name="Klaerr-Blanchard M."/>
            <person name="Klein C."/>
            <person name="Kobayashi Y."/>
            <person name="Koetter P."/>
            <person name="Koningstein G."/>
            <person name="Krogh S."/>
            <person name="Kumano M."/>
            <person name="Kurita K."/>
            <person name="Lapidus A."/>
            <person name="Lardinois S."/>
            <person name="Lauber J."/>
            <person name="Lazarevic V."/>
            <person name="Lee S.-M."/>
            <person name="Levine A."/>
            <person name="Liu H."/>
            <person name="Masuda S."/>
            <person name="Mauel C."/>
            <person name="Medigue C."/>
            <person name="Medina N."/>
            <person name="Mellado R.P."/>
            <person name="Mizuno M."/>
            <person name="Moestl D."/>
            <person name="Nakai S."/>
            <person name="Noback M."/>
            <person name="Noone D."/>
            <person name="O'Reilly M."/>
            <person name="Ogawa K."/>
            <person name="Ogiwara A."/>
            <person name="Oudega B."/>
            <person name="Park S.-H."/>
            <person name="Parro V."/>
            <person name="Pohl T.M."/>
            <person name="Portetelle D."/>
            <person name="Porwollik S."/>
            <person name="Prescott A.M."/>
            <person name="Presecan E."/>
            <person name="Pujic P."/>
            <person name="Purnelle B."/>
            <person name="Rapoport G."/>
            <person name="Rey M."/>
            <person name="Reynolds S."/>
            <person name="Rieger M."/>
            <person name="Rivolta C."/>
            <person name="Rocha E."/>
            <person name="Roche B."/>
            <person name="Rose M."/>
            <person name="Sadaie Y."/>
            <person name="Sato T."/>
            <person name="Scanlan E."/>
            <person name="Schleich S."/>
            <person name="Schroeter R."/>
            <person name="Scoffone F."/>
            <person name="Sekiguchi J."/>
            <person name="Sekowska A."/>
            <person name="Seror S.J."/>
            <person name="Serror P."/>
            <person name="Shin B.-S."/>
            <person name="Soldo B."/>
            <person name="Sorokin A."/>
            <person name="Tacconi E."/>
            <person name="Takagi T."/>
            <person name="Takahashi H."/>
            <person name="Takemaru K."/>
            <person name="Takeuchi M."/>
            <person name="Tamakoshi A."/>
            <person name="Tanaka T."/>
            <person name="Terpstra P."/>
            <person name="Tognoni A."/>
            <person name="Tosato V."/>
            <person name="Uchiyama S."/>
            <person name="Vandenbol M."/>
            <person name="Vannier F."/>
            <person name="Vassarotti A."/>
            <person name="Viari A."/>
            <person name="Wambutt R."/>
            <person name="Wedler E."/>
            <person name="Wedler H."/>
            <person name="Weitzenegger T."/>
            <person name="Winters P."/>
            <person name="Wipat A."/>
            <person name="Yamamoto H."/>
            <person name="Yamane K."/>
            <person name="Yasumoto K."/>
            <person name="Yata K."/>
            <person name="Yoshida K."/>
            <person name="Yoshikawa H.-F."/>
            <person name="Zumstein E."/>
            <person name="Yoshikawa H."/>
            <person name="Danchin A."/>
        </authorList>
    </citation>
    <scope>NUCLEOTIDE SEQUENCE [LARGE SCALE GENOMIC DNA]</scope>
    <source>
        <strain>168</strain>
    </source>
</reference>
<evidence type="ECO:0000250" key="1"/>
<evidence type="ECO:0000305" key="2"/>
<proteinExistence type="inferred from homology"/>
<accession>O31613</accession>
<organism>
    <name type="scientific">Bacillus subtilis (strain 168)</name>
    <dbReference type="NCBI Taxonomy" id="224308"/>
    <lineage>
        <taxon>Bacteria</taxon>
        <taxon>Bacillati</taxon>
        <taxon>Bacillota</taxon>
        <taxon>Bacilli</taxon>
        <taxon>Bacillales</taxon>
        <taxon>Bacillaceae</taxon>
        <taxon>Bacillus</taxon>
    </lineage>
</organism>
<keyword id="KW-0413">Isomerase</keyword>
<keyword id="KW-1185">Reference proteome</keyword>
<name>YJBO_BACSU</name>
<dbReference type="EC" id="5.4.99.-"/>
<dbReference type="EMBL" id="AL009126">
    <property type="protein sequence ID" value="CAB13019.1"/>
    <property type="molecule type" value="Genomic_DNA"/>
</dbReference>
<dbReference type="PIR" id="G69844">
    <property type="entry name" value="G69844"/>
</dbReference>
<dbReference type="RefSeq" id="NP_389044.1">
    <property type="nucleotide sequence ID" value="NC_000964.3"/>
</dbReference>
<dbReference type="RefSeq" id="WP_010886481.1">
    <property type="nucleotide sequence ID" value="NC_000964.3"/>
</dbReference>
<dbReference type="SMR" id="O31613"/>
<dbReference type="FunCoup" id="O31613">
    <property type="interactions" value="448"/>
</dbReference>
<dbReference type="IntAct" id="O31613">
    <property type="interactions" value="1"/>
</dbReference>
<dbReference type="STRING" id="224308.BSU11620"/>
<dbReference type="PaxDb" id="224308-BSU11620"/>
<dbReference type="EnsemblBacteria" id="CAB13019">
    <property type="protein sequence ID" value="CAB13019"/>
    <property type="gene ID" value="BSU_11620"/>
</dbReference>
<dbReference type="GeneID" id="939808"/>
<dbReference type="KEGG" id="bsu:BSU11620"/>
<dbReference type="eggNOG" id="COG0564">
    <property type="taxonomic scope" value="Bacteria"/>
</dbReference>
<dbReference type="InParanoid" id="O31613"/>
<dbReference type="OrthoDB" id="9807829at2"/>
<dbReference type="PhylomeDB" id="O31613"/>
<dbReference type="BioCyc" id="BSUB:BSU11620-MONOMER"/>
<dbReference type="Proteomes" id="UP000001570">
    <property type="component" value="Chromosome"/>
</dbReference>
<dbReference type="GO" id="GO:0140098">
    <property type="term" value="F:catalytic activity, acting on RNA"/>
    <property type="evidence" value="ECO:0007669"/>
    <property type="project" value="UniProtKB-ARBA"/>
</dbReference>
<dbReference type="GO" id="GO:0009982">
    <property type="term" value="F:pseudouridine synthase activity"/>
    <property type="evidence" value="ECO:0000318"/>
    <property type="project" value="GO_Central"/>
</dbReference>
<dbReference type="GO" id="GO:0003723">
    <property type="term" value="F:RNA binding"/>
    <property type="evidence" value="ECO:0007669"/>
    <property type="project" value="InterPro"/>
</dbReference>
<dbReference type="GO" id="GO:0000455">
    <property type="term" value="P:enzyme-directed rRNA pseudouridine synthesis"/>
    <property type="evidence" value="ECO:0000318"/>
    <property type="project" value="GO_Central"/>
</dbReference>
<dbReference type="CDD" id="cd02869">
    <property type="entry name" value="PseudoU_synth_RluA_like"/>
    <property type="match status" value="1"/>
</dbReference>
<dbReference type="FunFam" id="3.30.2350.10:FF:000005">
    <property type="entry name" value="Pseudouridine synthase"/>
    <property type="match status" value="1"/>
</dbReference>
<dbReference type="Gene3D" id="3.30.2350.10">
    <property type="entry name" value="Pseudouridine synthase"/>
    <property type="match status" value="1"/>
</dbReference>
<dbReference type="InterPro" id="IPR020103">
    <property type="entry name" value="PsdUridine_synth_cat_dom_sf"/>
</dbReference>
<dbReference type="InterPro" id="IPR006224">
    <property type="entry name" value="PsdUridine_synth_RluA-like_CS"/>
</dbReference>
<dbReference type="InterPro" id="IPR006225">
    <property type="entry name" value="PsdUridine_synth_RluC/D"/>
</dbReference>
<dbReference type="InterPro" id="IPR006145">
    <property type="entry name" value="PsdUridine_synth_RsuA/RluA"/>
</dbReference>
<dbReference type="InterPro" id="IPR050188">
    <property type="entry name" value="RluA_PseudoU_synthase"/>
</dbReference>
<dbReference type="NCBIfam" id="TIGR00005">
    <property type="entry name" value="rluA_subfam"/>
    <property type="match status" value="1"/>
</dbReference>
<dbReference type="PANTHER" id="PTHR21600">
    <property type="entry name" value="MITOCHONDRIAL RNA PSEUDOURIDINE SYNTHASE"/>
    <property type="match status" value="1"/>
</dbReference>
<dbReference type="PANTHER" id="PTHR21600:SF35">
    <property type="entry name" value="PSEUDOURIDINE SYNTHASE"/>
    <property type="match status" value="1"/>
</dbReference>
<dbReference type="Pfam" id="PF00849">
    <property type="entry name" value="PseudoU_synth_2"/>
    <property type="match status" value="1"/>
</dbReference>
<dbReference type="SUPFAM" id="SSF55120">
    <property type="entry name" value="Pseudouridine synthase"/>
    <property type="match status" value="1"/>
</dbReference>
<dbReference type="PROSITE" id="PS01129">
    <property type="entry name" value="PSI_RLU"/>
    <property type="match status" value="1"/>
</dbReference>
<feature type="chain" id="PRO_0000162729" description="Uncharacterized RNA pseudouridine synthase YjbO">
    <location>
        <begin position="1"/>
        <end position="283"/>
    </location>
</feature>
<feature type="active site" evidence="1">
    <location>
        <position position="121"/>
    </location>
</feature>
<comment type="catalytic activity">
    <reaction>
        <text>a uridine in RNA = a pseudouridine in RNA</text>
        <dbReference type="Rhea" id="RHEA:48348"/>
        <dbReference type="Rhea" id="RHEA-COMP:12068"/>
        <dbReference type="Rhea" id="RHEA-COMP:12069"/>
        <dbReference type="ChEBI" id="CHEBI:65314"/>
        <dbReference type="ChEBI" id="CHEBI:65315"/>
    </reaction>
</comment>
<comment type="similarity">
    <text evidence="2">Belongs to the pseudouridine synthase RluA family.</text>
</comment>
<gene>
    <name type="primary">yjbO</name>
    <name type="ordered locus">BSU11620</name>
</gene>
<protein>
    <recommendedName>
        <fullName>Uncharacterized RNA pseudouridine synthase YjbO</fullName>
        <ecNumber>5.4.99.-</ecNumber>
    </recommendedName>
    <alternativeName>
        <fullName>RNA pseudouridylate synthase</fullName>
    </alternativeName>
    <alternativeName>
        <fullName>RNA-uridine isomerase</fullName>
    </alternativeName>
</protein>